<comment type="function">
    <text evidence="1">Part of a membrane-bound complex that couples electron transfer with translocation of ions across the membrane. Required to maintain the reduced state of SoxR.</text>
</comment>
<comment type="subunit">
    <text evidence="1">The complex is composed of six subunits: RsxA, RsxB, RsxC, RsxD, RsxE and RsxG.</text>
</comment>
<comment type="subcellular location">
    <subcellularLocation>
        <location evidence="1">Cell inner membrane</location>
        <topology evidence="1">Multi-pass membrane protein</topology>
    </subcellularLocation>
</comment>
<comment type="similarity">
    <text evidence="1">Belongs to the NqrDE/RnfAE family.</text>
</comment>
<sequence length="193" mass="20898">MTDYLLLFVGTVLVNNFVLVKFLGLCPFMGVSKKLETAMGMGLATTFVMTLASICAWLIDTWILIPLNLIYLRTLAFILVIAVVVQFTEMVVRKTSPVLYRLLGIFLPLITTNCAVLGVALLNINLGHNFLQSALYGFSAAVGFSLVMVLFAAIRERLAVADVPAPFRGNAIALITAGLMSLAFMGFSGLVKL</sequence>
<name>RSXA_ECO7I</name>
<protein>
    <recommendedName>
        <fullName evidence="1">Ion-translocating oxidoreductase complex subunit A</fullName>
        <ecNumber evidence="1">7.-.-.-</ecNumber>
    </recommendedName>
    <alternativeName>
        <fullName evidence="1">Rsx electron transport complex subunit A</fullName>
    </alternativeName>
</protein>
<accession>B7NU06</accession>
<organism>
    <name type="scientific">Escherichia coli O7:K1 (strain IAI39 / ExPEC)</name>
    <dbReference type="NCBI Taxonomy" id="585057"/>
    <lineage>
        <taxon>Bacteria</taxon>
        <taxon>Pseudomonadati</taxon>
        <taxon>Pseudomonadota</taxon>
        <taxon>Gammaproteobacteria</taxon>
        <taxon>Enterobacterales</taxon>
        <taxon>Enterobacteriaceae</taxon>
        <taxon>Escherichia</taxon>
    </lineage>
</organism>
<proteinExistence type="inferred from homology"/>
<reference key="1">
    <citation type="journal article" date="2009" name="PLoS Genet.">
        <title>Organised genome dynamics in the Escherichia coli species results in highly diverse adaptive paths.</title>
        <authorList>
            <person name="Touchon M."/>
            <person name="Hoede C."/>
            <person name="Tenaillon O."/>
            <person name="Barbe V."/>
            <person name="Baeriswyl S."/>
            <person name="Bidet P."/>
            <person name="Bingen E."/>
            <person name="Bonacorsi S."/>
            <person name="Bouchier C."/>
            <person name="Bouvet O."/>
            <person name="Calteau A."/>
            <person name="Chiapello H."/>
            <person name="Clermont O."/>
            <person name="Cruveiller S."/>
            <person name="Danchin A."/>
            <person name="Diard M."/>
            <person name="Dossat C."/>
            <person name="Karoui M.E."/>
            <person name="Frapy E."/>
            <person name="Garry L."/>
            <person name="Ghigo J.M."/>
            <person name="Gilles A.M."/>
            <person name="Johnson J."/>
            <person name="Le Bouguenec C."/>
            <person name="Lescat M."/>
            <person name="Mangenot S."/>
            <person name="Martinez-Jehanne V."/>
            <person name="Matic I."/>
            <person name="Nassif X."/>
            <person name="Oztas S."/>
            <person name="Petit M.A."/>
            <person name="Pichon C."/>
            <person name="Rouy Z."/>
            <person name="Ruf C.S."/>
            <person name="Schneider D."/>
            <person name="Tourret J."/>
            <person name="Vacherie B."/>
            <person name="Vallenet D."/>
            <person name="Medigue C."/>
            <person name="Rocha E.P.C."/>
            <person name="Denamur E."/>
        </authorList>
    </citation>
    <scope>NUCLEOTIDE SEQUENCE [LARGE SCALE GENOMIC DNA]</scope>
    <source>
        <strain>IAI39 / ExPEC</strain>
    </source>
</reference>
<feature type="chain" id="PRO_1000191722" description="Ion-translocating oxidoreductase complex subunit A">
    <location>
        <begin position="1"/>
        <end position="193"/>
    </location>
</feature>
<feature type="transmembrane region" description="Helical" evidence="1">
    <location>
        <begin position="5"/>
        <end position="25"/>
    </location>
</feature>
<feature type="transmembrane region" description="Helical" evidence="1">
    <location>
        <begin position="39"/>
        <end position="59"/>
    </location>
</feature>
<feature type="transmembrane region" description="Helical" evidence="1">
    <location>
        <begin position="63"/>
        <end position="83"/>
    </location>
</feature>
<feature type="transmembrane region" description="Helical" evidence="1">
    <location>
        <begin position="102"/>
        <end position="122"/>
    </location>
</feature>
<feature type="transmembrane region" description="Helical" evidence="1">
    <location>
        <begin position="134"/>
        <end position="154"/>
    </location>
</feature>
<feature type="transmembrane region" description="Helical" evidence="1">
    <location>
        <begin position="171"/>
        <end position="191"/>
    </location>
</feature>
<evidence type="ECO:0000255" key="1">
    <source>
        <dbReference type="HAMAP-Rule" id="MF_00459"/>
    </source>
</evidence>
<dbReference type="EC" id="7.-.-.-" evidence="1"/>
<dbReference type="EMBL" id="CU928164">
    <property type="protein sequence ID" value="CAR17562.1"/>
    <property type="molecule type" value="Genomic_DNA"/>
</dbReference>
<dbReference type="RefSeq" id="WP_000133193.1">
    <property type="nucleotide sequence ID" value="NC_011750.1"/>
</dbReference>
<dbReference type="RefSeq" id="YP_002407434.1">
    <property type="nucleotide sequence ID" value="NC_011750.1"/>
</dbReference>
<dbReference type="SMR" id="B7NU06"/>
<dbReference type="STRING" id="585057.ECIAI39_1429"/>
<dbReference type="GeneID" id="89516393"/>
<dbReference type="KEGG" id="ect:ECIAI39_1429"/>
<dbReference type="PATRIC" id="fig|585057.6.peg.1495"/>
<dbReference type="HOGENOM" id="CLU_095255_1_0_6"/>
<dbReference type="Proteomes" id="UP000000749">
    <property type="component" value="Chromosome"/>
</dbReference>
<dbReference type="GO" id="GO:0005886">
    <property type="term" value="C:plasma membrane"/>
    <property type="evidence" value="ECO:0007669"/>
    <property type="project" value="UniProtKB-SubCell"/>
</dbReference>
<dbReference type="GO" id="GO:0022900">
    <property type="term" value="P:electron transport chain"/>
    <property type="evidence" value="ECO:0007669"/>
    <property type="project" value="UniProtKB-UniRule"/>
</dbReference>
<dbReference type="HAMAP" id="MF_00459">
    <property type="entry name" value="RsxA_RnfA"/>
    <property type="match status" value="1"/>
</dbReference>
<dbReference type="InterPro" id="IPR011293">
    <property type="entry name" value="Ion_transpt_RnfA/RsxA"/>
</dbReference>
<dbReference type="InterPro" id="IPR003667">
    <property type="entry name" value="NqrDE/RnfAE"/>
</dbReference>
<dbReference type="InterPro" id="IPR050133">
    <property type="entry name" value="NqrDE/RnfAE_oxidrdctase"/>
</dbReference>
<dbReference type="NCBIfam" id="NF003481">
    <property type="entry name" value="PRK05151.1"/>
    <property type="match status" value="1"/>
</dbReference>
<dbReference type="NCBIfam" id="TIGR01943">
    <property type="entry name" value="rnfA"/>
    <property type="match status" value="1"/>
</dbReference>
<dbReference type="PANTHER" id="PTHR30335">
    <property type="entry name" value="INTEGRAL MEMBRANE PROTEIN OF SOXR-REDUCING COMPLEX"/>
    <property type="match status" value="1"/>
</dbReference>
<dbReference type="PANTHER" id="PTHR30335:SF0">
    <property type="entry name" value="ION-TRANSLOCATING OXIDOREDUCTASE COMPLEX SUBUNIT A"/>
    <property type="match status" value="1"/>
</dbReference>
<dbReference type="Pfam" id="PF02508">
    <property type="entry name" value="Rnf-Nqr"/>
    <property type="match status" value="1"/>
</dbReference>
<dbReference type="PIRSF" id="PIRSF006102">
    <property type="entry name" value="NQR_DE"/>
    <property type="match status" value="1"/>
</dbReference>
<gene>
    <name evidence="1" type="primary">rsxA</name>
    <name type="ordered locus">ECIAI39_1429</name>
</gene>
<keyword id="KW-0997">Cell inner membrane</keyword>
<keyword id="KW-1003">Cell membrane</keyword>
<keyword id="KW-0249">Electron transport</keyword>
<keyword id="KW-0472">Membrane</keyword>
<keyword id="KW-1278">Translocase</keyword>
<keyword id="KW-0812">Transmembrane</keyword>
<keyword id="KW-1133">Transmembrane helix</keyword>
<keyword id="KW-0813">Transport</keyword>